<name>SMO_CHICK</name>
<keyword id="KW-1003">Cell membrane</keyword>
<keyword id="KW-0966">Cell projection</keyword>
<keyword id="KW-0217">Developmental protein</keyword>
<keyword id="KW-1015">Disulfide bond</keyword>
<keyword id="KW-0297">G-protein coupled receptor</keyword>
<keyword id="KW-0325">Glycoprotein</keyword>
<keyword id="KW-0472">Membrane</keyword>
<keyword id="KW-0675">Receptor</keyword>
<keyword id="KW-1185">Reference proteome</keyword>
<keyword id="KW-0732">Signal</keyword>
<keyword id="KW-0807">Transducer</keyword>
<keyword id="KW-0812">Transmembrane</keyword>
<keyword id="KW-1133">Transmembrane helix</keyword>
<proteinExistence type="evidence at transcript level"/>
<evidence type="ECO:0000250" key="1">
    <source>
        <dbReference type="UniProtKB" id="P56726"/>
    </source>
</evidence>
<evidence type="ECO:0000250" key="2">
    <source>
        <dbReference type="UniProtKB" id="Q99835"/>
    </source>
</evidence>
<evidence type="ECO:0000255" key="3"/>
<evidence type="ECO:0000255" key="4">
    <source>
        <dbReference type="PROSITE-ProRule" id="PRU00090"/>
    </source>
</evidence>
<evidence type="ECO:0000256" key="5">
    <source>
        <dbReference type="SAM" id="MobiDB-lite"/>
    </source>
</evidence>
<evidence type="ECO:0000305" key="6"/>
<protein>
    <recommendedName>
        <fullName>Protein smoothened</fullName>
    </recommendedName>
</protein>
<accession>O42224</accession>
<sequence length="794" mass="88255">GPCWLWALALGLALGPRRCPAAPLNASAAPPERCRRPAACERLRFGSCLGSALPYAHTSTLLAADSGSQEEAHGKLLLWSGLRNAPRCWDVIQPLLCAVYMPKCEDGQVELPSQTLCQATRAPCTIVERERGWPDFLKCTPDRFPEGCPNEVQNIKFNSSGQCEAPLVRTYNPKSWYEDVEGCGIQCQNPLFTETEHREMHVYIAFSSVTISCTFFTLATFVADWRNSNRYPAVILFYVNACFFVGSIGCVAQFMDGARDEIVCRADGTMRLGEPTSNETLSCVIIFVIVYYSLMSGVIWFVMLTYAWHTSFKALGTTYQPLLGKTSYFHLITWSIPFVLTVAILAVAQVDGDSVSGICFVGYKNYRYRAGFVLAPIGLVLIVGGYFLIRGVMTLFSIKSNHPGLLSEKAASKINETMLRLGIFGFLAFGFVFITFGCHFYDFFNQAEWERSFREYVLCEANVTIATQTNKPIPECEIKNRPSLLVEKINLFAMFGTGISMSTWVWTKATLLIWKRTWCRLTGQSDDQPKRIKKSKMIAKAFSKRKELLRDPGRELSFSMHTVSHDGPVAGLAFDINEPSADVSSAWAQHVTKMVARRGAILPQDVSVTPVATPVPPEERSNLWVVEADVSPELQKRSRKKKRRKKKKEEVCPERRAGLSVAPLTPSSVPRLPRLPQQPCLVAIPRHRGDTFIPTVLPGLSNGAGGLWDGRRRAHVPHFITNPFCPESGSPEDEENPGPSVGHRQHNGGRRWPPEPLPGGSGVTRTRGRRAGLAPIHSRTNLVNAELLDADLDF</sequence>
<reference key="1">
    <citation type="journal article" date="1997" name="Cold Spring Harb. Symp. Quant. Biol.">
        <title>The smoothened gene and hedgehog signal transduction in Drosophila and vertebrate development.</title>
        <authorList>
            <person name="Quirk J."/>
            <person name="van den Heuvel M."/>
            <person name="Henrique D."/>
            <person name="Marigo V."/>
            <person name="Sheer D."/>
            <person name="Tabin C."/>
            <person name="Ingham P.W."/>
        </authorList>
    </citation>
    <scope>NUCLEOTIDE SEQUENCE [MRNA]</scope>
</reference>
<comment type="function">
    <text evidence="1 2">G protein-coupled receptor which associates with the patched protein (PTCH) to transduce hedgehog protein signaling. Binding of sonic hedgehog (SHH) to its receptor patched prevents inhibition of smoothened (SMO) by patched. When active, SMO binds to and sequesters protein kinase A catalytic subunit PRKACA at the cell membrane, preventing PRKACA-mediated phosphorylation of GLI transcription factors which releases the GLI proteins from PRKACA-mediated inhibition and allows for transcriptional activation of hedgehog pathway target genes.</text>
</comment>
<comment type="subunit">
    <text evidence="2">Homodimer.</text>
</comment>
<comment type="subcellular location">
    <subcellularLocation>
        <location evidence="1">Cell membrane</location>
        <topology evidence="3">Multi-pass membrane protein</topology>
    </subcellularLocation>
    <subcellularLocation>
        <location evidence="1">Cell projection</location>
        <location evidence="1">Cilium</location>
    </subcellularLocation>
    <text evidence="1">Cilium localization is promoted by SHH and is required for activity.</text>
</comment>
<comment type="domain">
    <text evidence="1">The N-terminal extracellular domain mediates sterol-binding which is required for maximal activation of signaling. Contains a second sterol-binding site within the seven-transmembrane pocket which is also required for activation. The activating sterol is likely to be cholesterol. The extracellular site is required for SHH-induced activity while the site within the transmembrane pocket regulates basal signaling in the absence of SHH.</text>
</comment>
<comment type="similarity">
    <text evidence="6">Belongs to the G-protein coupled receptor Fz/Smo family.</text>
</comment>
<feature type="signal peptide" evidence="3">
    <location>
        <begin position="1" status="less than"/>
        <end position="15"/>
    </location>
</feature>
<feature type="chain" id="PRO_0000013018" description="Protein smoothened">
    <location>
        <begin position="16"/>
        <end position="794"/>
    </location>
</feature>
<feature type="topological domain" description="Extracellular" evidence="3">
    <location>
        <begin position="16"/>
        <end position="201"/>
    </location>
</feature>
<feature type="transmembrane region" description="Helical; Name=1" evidence="3">
    <location>
        <begin position="202"/>
        <end position="222"/>
    </location>
</feature>
<feature type="topological domain" description="Cytoplasmic" evidence="3">
    <location>
        <begin position="223"/>
        <end position="231"/>
    </location>
</feature>
<feature type="transmembrane region" description="Helical; Name=2" evidence="3">
    <location>
        <begin position="232"/>
        <end position="252"/>
    </location>
</feature>
<feature type="topological domain" description="Extracellular" evidence="3">
    <location>
        <begin position="253"/>
        <end position="283"/>
    </location>
</feature>
<feature type="transmembrane region" description="Helical; Name=3" evidence="3">
    <location>
        <begin position="284"/>
        <end position="304"/>
    </location>
</feature>
<feature type="topological domain" description="Cytoplasmic" evidence="3">
    <location>
        <begin position="305"/>
        <end position="327"/>
    </location>
</feature>
<feature type="transmembrane region" description="Helical; Name=4" evidence="3">
    <location>
        <begin position="328"/>
        <end position="348"/>
    </location>
</feature>
<feature type="topological domain" description="Extracellular" evidence="3">
    <location>
        <begin position="349"/>
        <end position="371"/>
    </location>
</feature>
<feature type="transmembrane region" description="Helical; Name=5" evidence="3">
    <location>
        <begin position="372"/>
        <end position="392"/>
    </location>
</feature>
<feature type="topological domain" description="Cytoplasmic" evidence="3">
    <location>
        <begin position="393"/>
        <end position="420"/>
    </location>
</feature>
<feature type="transmembrane region" description="Helical; Name=6" evidence="3">
    <location>
        <begin position="421"/>
        <end position="440"/>
    </location>
</feature>
<feature type="topological domain" description="Extracellular" evidence="3">
    <location>
        <begin position="441"/>
        <end position="493"/>
    </location>
</feature>
<feature type="transmembrane region" description="Helical; Name=7" evidence="3">
    <location>
        <begin position="494"/>
        <end position="514"/>
    </location>
</feature>
<feature type="topological domain" description="Cytoplasmic" evidence="3">
    <location>
        <begin position="515"/>
        <end position="794"/>
    </location>
</feature>
<feature type="domain" description="FZ" evidence="4">
    <location>
        <begin position="35"/>
        <end position="151"/>
    </location>
</feature>
<feature type="region of interest" description="Disordered" evidence="5">
    <location>
        <begin position="634"/>
        <end position="655"/>
    </location>
</feature>
<feature type="region of interest" description="Disordered" evidence="5">
    <location>
        <begin position="723"/>
        <end position="773"/>
    </location>
</feature>
<feature type="compositionally biased region" description="Basic residues" evidence="5">
    <location>
        <begin position="637"/>
        <end position="647"/>
    </location>
</feature>
<feature type="binding site" evidence="1">
    <location>
        <position position="65"/>
    </location>
    <ligand>
        <name>cholesterol</name>
        <dbReference type="ChEBI" id="CHEBI:16113"/>
    </ligand>
</feature>
<feature type="binding site" evidence="1">
    <location>
        <position position="363"/>
    </location>
    <ligand>
        <name>cholesterol</name>
        <dbReference type="ChEBI" id="CHEBI:16113"/>
    </ligand>
</feature>
<feature type="glycosylation site" description="N-linked (GlcNAc...) asparagine" evidence="3">
    <location>
        <position position="25"/>
    </location>
</feature>
<feature type="glycosylation site" description="N-linked (GlcNAc...) asparagine" evidence="3">
    <location>
        <position position="158"/>
    </location>
</feature>
<feature type="glycosylation site" description="N-linked (GlcNAc...) asparagine" evidence="3">
    <location>
        <position position="278"/>
    </location>
</feature>
<feature type="glycosylation site" description="N-linked (GlcNAc...) asparagine" evidence="3">
    <location>
        <position position="462"/>
    </location>
</feature>
<feature type="disulfide bond" evidence="1">
    <location>
        <begin position="34"/>
        <end position="148"/>
    </location>
</feature>
<feature type="disulfide bond" evidence="4">
    <location>
        <begin position="40"/>
        <end position="104"/>
    </location>
</feature>
<feature type="disulfide bond" evidence="4">
    <location>
        <begin position="48"/>
        <end position="97"/>
    </location>
</feature>
<feature type="disulfide bond" evidence="4">
    <location>
        <begin position="88"/>
        <end position="124"/>
    </location>
</feature>
<feature type="disulfide bond" evidence="4">
    <location>
        <begin position="117"/>
        <end position="139"/>
    </location>
</feature>
<feature type="disulfide bond" evidence="4">
    <location>
        <begin position="163"/>
        <end position="183"/>
    </location>
</feature>
<feature type="disulfide bond" evidence="4">
    <location>
        <begin position="187"/>
        <end position="264"/>
    </location>
</feature>
<feature type="disulfide bond" evidence="4">
    <location>
        <begin position="283"/>
        <end position="359"/>
    </location>
</feature>
<feature type="disulfide bond" evidence="4">
    <location>
        <begin position="459"/>
        <end position="476"/>
    </location>
</feature>
<feature type="non-terminal residue">
    <location>
        <position position="1"/>
    </location>
</feature>
<dbReference type="EMBL" id="AF019977">
    <property type="protein sequence ID" value="AAB84389.1"/>
    <property type="molecule type" value="mRNA"/>
</dbReference>
<dbReference type="SMR" id="O42224"/>
<dbReference type="FunCoup" id="O42224">
    <property type="interactions" value="555"/>
</dbReference>
<dbReference type="STRING" id="9031.ENSGALP00000048984"/>
<dbReference type="GlyCosmos" id="O42224">
    <property type="glycosylation" value="4 sites, No reported glycans"/>
</dbReference>
<dbReference type="GlyGen" id="O42224">
    <property type="glycosylation" value="4 sites"/>
</dbReference>
<dbReference type="PaxDb" id="9031-ENSGALP00000039562"/>
<dbReference type="VEuPathDB" id="HostDB:geneid_395949"/>
<dbReference type="eggNOG" id="KOG3577">
    <property type="taxonomic scope" value="Eukaryota"/>
</dbReference>
<dbReference type="InParanoid" id="O42224"/>
<dbReference type="OrthoDB" id="10064659at2759"/>
<dbReference type="PhylomeDB" id="O42224"/>
<dbReference type="Proteomes" id="UP000000539">
    <property type="component" value="Unassembled WGS sequence"/>
</dbReference>
<dbReference type="GO" id="GO:0005929">
    <property type="term" value="C:cilium"/>
    <property type="evidence" value="ECO:0000250"/>
    <property type="project" value="UniProtKB"/>
</dbReference>
<dbReference type="GO" id="GO:0030425">
    <property type="term" value="C:dendrite"/>
    <property type="evidence" value="ECO:0000318"/>
    <property type="project" value="GO_Central"/>
</dbReference>
<dbReference type="GO" id="GO:0005886">
    <property type="term" value="C:plasma membrane"/>
    <property type="evidence" value="ECO:0000250"/>
    <property type="project" value="UniProtKB"/>
</dbReference>
<dbReference type="GO" id="GO:0004930">
    <property type="term" value="F:G protein-coupled receptor activity"/>
    <property type="evidence" value="ECO:0007669"/>
    <property type="project" value="UniProtKB-KW"/>
</dbReference>
<dbReference type="GO" id="GO:0008142">
    <property type="term" value="F:oxysterol binding"/>
    <property type="evidence" value="ECO:0000250"/>
    <property type="project" value="UniProtKB"/>
</dbReference>
<dbReference type="GO" id="GO:0005113">
    <property type="term" value="F:patched binding"/>
    <property type="evidence" value="ECO:0000318"/>
    <property type="project" value="GO_Central"/>
</dbReference>
<dbReference type="GO" id="GO:0034236">
    <property type="term" value="F:protein kinase A catalytic subunit binding"/>
    <property type="evidence" value="ECO:0000250"/>
    <property type="project" value="UniProtKB"/>
</dbReference>
<dbReference type="GO" id="GO:0140311">
    <property type="term" value="F:protein sequestering activity"/>
    <property type="evidence" value="ECO:0000250"/>
    <property type="project" value="UniProtKB"/>
</dbReference>
<dbReference type="GO" id="GO:0007417">
    <property type="term" value="P:central nervous system development"/>
    <property type="evidence" value="ECO:0000318"/>
    <property type="project" value="GO_Central"/>
</dbReference>
<dbReference type="GO" id="GO:0071679">
    <property type="term" value="P:commissural neuron axon guidance"/>
    <property type="evidence" value="ECO:0000318"/>
    <property type="project" value="GO_Central"/>
</dbReference>
<dbReference type="GO" id="GO:0001933">
    <property type="term" value="P:negative regulation of protein phosphorylation"/>
    <property type="evidence" value="ECO:0000250"/>
    <property type="project" value="UniProtKB"/>
</dbReference>
<dbReference type="GO" id="GO:0007389">
    <property type="term" value="P:pattern specification process"/>
    <property type="evidence" value="ECO:0000318"/>
    <property type="project" value="GO_Central"/>
</dbReference>
<dbReference type="GO" id="GO:0007224">
    <property type="term" value="P:smoothened signaling pathway"/>
    <property type="evidence" value="ECO:0000250"/>
    <property type="project" value="UniProtKB"/>
</dbReference>
<dbReference type="GO" id="GO:0009888">
    <property type="term" value="P:tissue development"/>
    <property type="evidence" value="ECO:0007669"/>
    <property type="project" value="UniProtKB-ARBA"/>
</dbReference>
<dbReference type="CDD" id="cd15030">
    <property type="entry name" value="7tmF_SMO_homolog"/>
    <property type="match status" value="1"/>
</dbReference>
<dbReference type="CDD" id="cd07451">
    <property type="entry name" value="CRD_SMO"/>
    <property type="match status" value="1"/>
</dbReference>
<dbReference type="FunFam" id="1.10.2000.10:FF:000010">
    <property type="entry name" value="Smoothened, frizzled class receptor"/>
    <property type="match status" value="1"/>
</dbReference>
<dbReference type="FunFam" id="1.20.1070.10:FF:000068">
    <property type="entry name" value="Smoothened, frizzled class receptor"/>
    <property type="match status" value="1"/>
</dbReference>
<dbReference type="Gene3D" id="1.10.2000.10">
    <property type="entry name" value="Frizzled cysteine-rich domain"/>
    <property type="match status" value="1"/>
</dbReference>
<dbReference type="Gene3D" id="1.20.1070.10">
    <property type="entry name" value="Rhodopsin 7-helix transmembrane proteins"/>
    <property type="match status" value="1"/>
</dbReference>
<dbReference type="InterPro" id="IPR015526">
    <property type="entry name" value="Frizzled/SFRP"/>
</dbReference>
<dbReference type="InterPro" id="IPR000539">
    <property type="entry name" value="Frizzled/Smoothened_7TM"/>
</dbReference>
<dbReference type="InterPro" id="IPR020067">
    <property type="entry name" value="Frizzled_dom"/>
</dbReference>
<dbReference type="InterPro" id="IPR036790">
    <property type="entry name" value="Frizzled_dom_sf"/>
</dbReference>
<dbReference type="InterPro" id="IPR017981">
    <property type="entry name" value="GPCR_2-like_7TM"/>
</dbReference>
<dbReference type="InterPro" id="IPR035683">
    <property type="entry name" value="SMO_7TM"/>
</dbReference>
<dbReference type="InterPro" id="IPR041771">
    <property type="entry name" value="SMO_CRD"/>
</dbReference>
<dbReference type="PANTHER" id="PTHR11309">
    <property type="entry name" value="FRIZZLED"/>
    <property type="match status" value="1"/>
</dbReference>
<dbReference type="PANTHER" id="PTHR11309:SF35">
    <property type="entry name" value="PROTEIN SMOOTHENED"/>
    <property type="match status" value="1"/>
</dbReference>
<dbReference type="Pfam" id="PF01534">
    <property type="entry name" value="Frizzled"/>
    <property type="match status" value="1"/>
</dbReference>
<dbReference type="Pfam" id="PF01392">
    <property type="entry name" value="Fz"/>
    <property type="match status" value="1"/>
</dbReference>
<dbReference type="PRINTS" id="PR00489">
    <property type="entry name" value="FRIZZLED"/>
</dbReference>
<dbReference type="SMART" id="SM00063">
    <property type="entry name" value="FRI"/>
    <property type="match status" value="1"/>
</dbReference>
<dbReference type="SMART" id="SM01330">
    <property type="entry name" value="Frizzled"/>
    <property type="match status" value="1"/>
</dbReference>
<dbReference type="SUPFAM" id="SSF63501">
    <property type="entry name" value="Frizzled cysteine-rich domain"/>
    <property type="match status" value="1"/>
</dbReference>
<dbReference type="PROSITE" id="PS50038">
    <property type="entry name" value="FZ"/>
    <property type="match status" value="1"/>
</dbReference>
<dbReference type="PROSITE" id="PS50261">
    <property type="entry name" value="G_PROTEIN_RECEP_F2_4"/>
    <property type="match status" value="1"/>
</dbReference>
<organism>
    <name type="scientific">Gallus gallus</name>
    <name type="common">Chicken</name>
    <dbReference type="NCBI Taxonomy" id="9031"/>
    <lineage>
        <taxon>Eukaryota</taxon>
        <taxon>Metazoa</taxon>
        <taxon>Chordata</taxon>
        <taxon>Craniata</taxon>
        <taxon>Vertebrata</taxon>
        <taxon>Euteleostomi</taxon>
        <taxon>Archelosauria</taxon>
        <taxon>Archosauria</taxon>
        <taxon>Dinosauria</taxon>
        <taxon>Saurischia</taxon>
        <taxon>Theropoda</taxon>
        <taxon>Coelurosauria</taxon>
        <taxon>Aves</taxon>
        <taxon>Neognathae</taxon>
        <taxon>Galloanserae</taxon>
        <taxon>Galliformes</taxon>
        <taxon>Phasianidae</taxon>
        <taxon>Phasianinae</taxon>
        <taxon>Gallus</taxon>
    </lineage>
</organism>
<gene>
    <name type="primary">SMO</name>
    <name type="synonym">SMOH</name>
</gene>